<organism>
    <name type="scientific">Halalkalibacterium halodurans (strain ATCC BAA-125 / DSM 18197 / FERM 7344 / JCM 9153 / C-125)</name>
    <name type="common">Bacillus halodurans</name>
    <dbReference type="NCBI Taxonomy" id="272558"/>
    <lineage>
        <taxon>Bacteria</taxon>
        <taxon>Bacillati</taxon>
        <taxon>Bacillota</taxon>
        <taxon>Bacilli</taxon>
        <taxon>Bacillales</taxon>
        <taxon>Bacillaceae</taxon>
        <taxon>Halalkalibacterium (ex Joshi et al. 2022)</taxon>
    </lineage>
</organism>
<comment type="cofactor">
    <cofactor evidence="1">
        <name>FMN</name>
        <dbReference type="ChEBI" id="CHEBI:58210"/>
    </cofactor>
</comment>
<comment type="similarity">
    <text evidence="2">Belongs to the flavoredoxin family.</text>
</comment>
<keyword id="KW-0285">Flavoprotein</keyword>
<keyword id="KW-0288">FMN</keyword>
<keyword id="KW-1185">Reference proteome</keyword>
<dbReference type="EMBL" id="BA000004">
    <property type="protein sequence ID" value="BAB05997.1"/>
    <property type="molecule type" value="Genomic_DNA"/>
</dbReference>
<dbReference type="PIR" id="F83934">
    <property type="entry name" value="F83934"/>
</dbReference>
<dbReference type="SMR" id="Q9KAK9"/>
<dbReference type="STRING" id="272558.gene:10728176"/>
<dbReference type="KEGG" id="bha:BH2278"/>
<dbReference type="eggNOG" id="COG1853">
    <property type="taxonomic scope" value="Bacteria"/>
</dbReference>
<dbReference type="HOGENOM" id="CLU_059021_3_1_9"/>
<dbReference type="Proteomes" id="UP000001258">
    <property type="component" value="Chromosome"/>
</dbReference>
<dbReference type="GO" id="GO:0010181">
    <property type="term" value="F:FMN binding"/>
    <property type="evidence" value="ECO:0007669"/>
    <property type="project" value="InterPro"/>
</dbReference>
<dbReference type="GO" id="GO:0016646">
    <property type="term" value="F:oxidoreductase activity, acting on the CH-NH group of donors, NAD or NADP as acceptor"/>
    <property type="evidence" value="ECO:0007669"/>
    <property type="project" value="UniProtKB-ARBA"/>
</dbReference>
<dbReference type="Gene3D" id="2.30.110.10">
    <property type="entry name" value="Electron Transport, Fmn-binding Protein, Chain A"/>
    <property type="match status" value="1"/>
</dbReference>
<dbReference type="InterPro" id="IPR002563">
    <property type="entry name" value="Flavin_Rdtase-like_dom"/>
</dbReference>
<dbReference type="InterPro" id="IPR012349">
    <property type="entry name" value="Split_barrel_FMN-bd"/>
</dbReference>
<dbReference type="PANTHER" id="PTHR33798:SF5">
    <property type="entry name" value="FLAVIN REDUCTASE LIKE DOMAIN-CONTAINING PROTEIN"/>
    <property type="match status" value="1"/>
</dbReference>
<dbReference type="PANTHER" id="PTHR33798">
    <property type="entry name" value="FLAVOPROTEIN OXYGENASE"/>
    <property type="match status" value="1"/>
</dbReference>
<dbReference type="Pfam" id="PF01613">
    <property type="entry name" value="Flavin_Reduct"/>
    <property type="match status" value="1"/>
</dbReference>
<dbReference type="SMART" id="SM00903">
    <property type="entry name" value="Flavin_Reduct"/>
    <property type="match status" value="1"/>
</dbReference>
<dbReference type="SUPFAM" id="SSF50475">
    <property type="entry name" value="FMN-binding split barrel"/>
    <property type="match status" value="1"/>
</dbReference>
<feature type="chain" id="PRO_0000085522" description="Uncharacterized protein BH2278">
    <location>
        <begin position="1"/>
        <end position="209"/>
    </location>
</feature>
<evidence type="ECO:0000250" key="1"/>
<evidence type="ECO:0000305" key="2"/>
<name>Y2278_HALH5</name>
<gene>
    <name type="ordered locus">BH2278</name>
</gene>
<accession>Q9KAK9</accession>
<protein>
    <recommendedName>
        <fullName>Uncharacterized protein BH2278</fullName>
    </recommendedName>
</protein>
<proteinExistence type="inferred from homology"/>
<reference key="1">
    <citation type="journal article" date="2000" name="Nucleic Acids Res.">
        <title>Complete genome sequence of the alkaliphilic bacterium Bacillus halodurans and genomic sequence comparison with Bacillus subtilis.</title>
        <authorList>
            <person name="Takami H."/>
            <person name="Nakasone K."/>
            <person name="Takaki Y."/>
            <person name="Maeno G."/>
            <person name="Sasaki R."/>
            <person name="Masui N."/>
            <person name="Fuji F."/>
            <person name="Hirama C."/>
            <person name="Nakamura Y."/>
            <person name="Ogasawara N."/>
            <person name="Kuhara S."/>
            <person name="Horikoshi K."/>
        </authorList>
    </citation>
    <scope>NUCLEOTIDE SEQUENCE [LARGE SCALE GENOMIC DNA]</scope>
    <source>
        <strain>ATCC BAA-125 / DSM 18197 / FERM 7344 / JCM 9153 / C-125</strain>
    </source>
</reference>
<sequence>MKLNPDSLSRKENYRLLIGAVLPRPIAFVTTKSKAGVVNAAPFSFYNVLTAEPPLIGISVGRKPDGTPKDTARNGQEIGEFVVHVVDEQNVEAVNVSSIPLPPEESEVEYAGLTEVPSEVVSVPSLAESRIRLECKVENVIPIGGKGGEPAADFLIGRVVHYEVADDLFQDGGIDTEALRPVSRLAGNEYGKYGETFSLDRPTISQNRE</sequence>